<evidence type="ECO:0000255" key="1">
    <source>
        <dbReference type="HAMAP-Rule" id="MF_00435"/>
    </source>
</evidence>
<evidence type="ECO:0000255" key="2">
    <source>
        <dbReference type="PROSITE-ProRule" id="PRU01197"/>
    </source>
</evidence>
<evidence type="ECO:0000255" key="3">
    <source>
        <dbReference type="PROSITE-ProRule" id="PRU01198"/>
    </source>
</evidence>
<sequence>MRVYYDRDADLNLIKGKKVVIVGYGSQGHAHALNLKDSGVKEIAIALRKGSASAQKAEAAGFKVMDVAEAAKWGDVVMMLTPDELQGDIYRENLHDNMKKGAALIFAHGLNVHFNLLDPRADLDVLMIAPKGPGHTVRSEYQRGGGVPCLIAVARDSSGNAHDLGLSYASAVGGGRAGIIETTFREECETDLFGEQVVLCGGLVELIKNGYETLVEAGYAPEMAYFECLHEVKLIVDLIYEGGIANMNYSISNTAEYGEYVTGPRIVTEETKKEMKRVLNDIQSGKFARDWMLENKVNQTSFKATRARLAAHPIEQVGAKLRDMMPWIKKGALVDKSKN</sequence>
<keyword id="KW-0028">Amino-acid biosynthesis</keyword>
<keyword id="KW-0100">Branched-chain amino acid biosynthesis</keyword>
<keyword id="KW-0460">Magnesium</keyword>
<keyword id="KW-0479">Metal-binding</keyword>
<keyword id="KW-0521">NADP</keyword>
<keyword id="KW-0560">Oxidoreductase</keyword>
<keyword id="KW-1185">Reference proteome</keyword>
<name>ILVC_NITHX</name>
<reference key="1">
    <citation type="submission" date="2006-03" db="EMBL/GenBank/DDBJ databases">
        <title>Complete sequence of chromosome of Nitrobacter hamburgensis X14.</title>
        <authorList>
            <consortium name="US DOE Joint Genome Institute"/>
            <person name="Copeland A."/>
            <person name="Lucas S."/>
            <person name="Lapidus A."/>
            <person name="Barry K."/>
            <person name="Detter J.C."/>
            <person name="Glavina del Rio T."/>
            <person name="Hammon N."/>
            <person name="Israni S."/>
            <person name="Dalin E."/>
            <person name="Tice H."/>
            <person name="Pitluck S."/>
            <person name="Chain P."/>
            <person name="Malfatti S."/>
            <person name="Shin M."/>
            <person name="Vergez L."/>
            <person name="Schmutz J."/>
            <person name="Larimer F."/>
            <person name="Land M."/>
            <person name="Hauser L."/>
            <person name="Kyrpides N."/>
            <person name="Ivanova N."/>
            <person name="Ward B."/>
            <person name="Arp D."/>
            <person name="Klotz M."/>
            <person name="Stein L."/>
            <person name="O'Mullan G."/>
            <person name="Starkenburg S."/>
            <person name="Sayavedra L."/>
            <person name="Poret-Peterson A.T."/>
            <person name="Gentry M.E."/>
            <person name="Bruce D."/>
            <person name="Richardson P."/>
        </authorList>
    </citation>
    <scope>NUCLEOTIDE SEQUENCE [LARGE SCALE GENOMIC DNA]</scope>
    <source>
        <strain>DSM 10229 / NCIMB 13809 / X14</strain>
    </source>
</reference>
<gene>
    <name evidence="1" type="primary">ilvC</name>
    <name type="ordered locus">Nham_2720</name>
</gene>
<feature type="chain" id="PRO_0000252769" description="Ketol-acid reductoisomerase (NADP(+))">
    <location>
        <begin position="1"/>
        <end position="339"/>
    </location>
</feature>
<feature type="domain" description="KARI N-terminal Rossmann" evidence="2">
    <location>
        <begin position="1"/>
        <end position="182"/>
    </location>
</feature>
<feature type="domain" description="KARI C-terminal knotted" evidence="3">
    <location>
        <begin position="183"/>
        <end position="328"/>
    </location>
</feature>
<feature type="active site" evidence="1">
    <location>
        <position position="108"/>
    </location>
</feature>
<feature type="binding site" evidence="1">
    <location>
        <begin position="24"/>
        <end position="27"/>
    </location>
    <ligand>
        <name>NADP(+)</name>
        <dbReference type="ChEBI" id="CHEBI:58349"/>
    </ligand>
</feature>
<feature type="binding site" evidence="1">
    <location>
        <position position="48"/>
    </location>
    <ligand>
        <name>NADP(+)</name>
        <dbReference type="ChEBI" id="CHEBI:58349"/>
    </ligand>
</feature>
<feature type="binding site" evidence="1">
    <location>
        <position position="51"/>
    </location>
    <ligand>
        <name>NADP(+)</name>
        <dbReference type="ChEBI" id="CHEBI:58349"/>
    </ligand>
</feature>
<feature type="binding site" evidence="1">
    <location>
        <position position="53"/>
    </location>
    <ligand>
        <name>NADP(+)</name>
        <dbReference type="ChEBI" id="CHEBI:58349"/>
    </ligand>
</feature>
<feature type="binding site" evidence="1">
    <location>
        <begin position="83"/>
        <end position="86"/>
    </location>
    <ligand>
        <name>NADP(+)</name>
        <dbReference type="ChEBI" id="CHEBI:58349"/>
    </ligand>
</feature>
<feature type="binding site" evidence="1">
    <location>
        <position position="134"/>
    </location>
    <ligand>
        <name>NADP(+)</name>
        <dbReference type="ChEBI" id="CHEBI:58349"/>
    </ligand>
</feature>
<feature type="binding site" evidence="1">
    <location>
        <position position="191"/>
    </location>
    <ligand>
        <name>Mg(2+)</name>
        <dbReference type="ChEBI" id="CHEBI:18420"/>
        <label>1</label>
    </ligand>
</feature>
<feature type="binding site" evidence="1">
    <location>
        <position position="191"/>
    </location>
    <ligand>
        <name>Mg(2+)</name>
        <dbReference type="ChEBI" id="CHEBI:18420"/>
        <label>2</label>
    </ligand>
</feature>
<feature type="binding site" evidence="1">
    <location>
        <position position="195"/>
    </location>
    <ligand>
        <name>Mg(2+)</name>
        <dbReference type="ChEBI" id="CHEBI:18420"/>
        <label>1</label>
    </ligand>
</feature>
<feature type="binding site" evidence="1">
    <location>
        <position position="227"/>
    </location>
    <ligand>
        <name>Mg(2+)</name>
        <dbReference type="ChEBI" id="CHEBI:18420"/>
        <label>2</label>
    </ligand>
</feature>
<feature type="binding site" evidence="1">
    <location>
        <position position="231"/>
    </location>
    <ligand>
        <name>Mg(2+)</name>
        <dbReference type="ChEBI" id="CHEBI:18420"/>
        <label>2</label>
    </ligand>
</feature>
<feature type="binding site" evidence="1">
    <location>
        <position position="252"/>
    </location>
    <ligand>
        <name>substrate</name>
    </ligand>
</feature>
<organism>
    <name type="scientific">Nitrobacter hamburgensis (strain DSM 10229 / NCIMB 13809 / X14)</name>
    <dbReference type="NCBI Taxonomy" id="323097"/>
    <lineage>
        <taxon>Bacteria</taxon>
        <taxon>Pseudomonadati</taxon>
        <taxon>Pseudomonadota</taxon>
        <taxon>Alphaproteobacteria</taxon>
        <taxon>Hyphomicrobiales</taxon>
        <taxon>Nitrobacteraceae</taxon>
        <taxon>Nitrobacter</taxon>
    </lineage>
</organism>
<accession>Q1QJU8</accession>
<proteinExistence type="inferred from homology"/>
<protein>
    <recommendedName>
        <fullName evidence="1">Ketol-acid reductoisomerase (NADP(+))</fullName>
        <shortName evidence="1">KARI</shortName>
        <ecNumber evidence="1">1.1.1.86</ecNumber>
    </recommendedName>
    <alternativeName>
        <fullName evidence="1">Acetohydroxy-acid isomeroreductase</fullName>
        <shortName evidence="1">AHIR</shortName>
    </alternativeName>
    <alternativeName>
        <fullName evidence="1">Alpha-keto-beta-hydroxylacyl reductoisomerase</fullName>
    </alternativeName>
    <alternativeName>
        <fullName evidence="1">Ketol-acid reductoisomerase type 1</fullName>
    </alternativeName>
    <alternativeName>
        <fullName evidence="1">Ketol-acid reductoisomerase type I</fullName>
    </alternativeName>
</protein>
<comment type="function">
    <text evidence="1">Involved in the biosynthesis of branched-chain amino acids (BCAA). Catalyzes an alkyl-migration followed by a ketol-acid reduction of (S)-2-acetolactate (S2AL) to yield (R)-2,3-dihydroxy-isovalerate. In the isomerase reaction, S2AL is rearranged via a Mg-dependent methyl migration to produce 3-hydroxy-3-methyl-2-ketobutyrate (HMKB). In the reductase reaction, this 2-ketoacid undergoes a metal-dependent reduction by NADPH to yield (R)-2,3-dihydroxy-isovalerate.</text>
</comment>
<comment type="catalytic activity">
    <reaction evidence="1">
        <text>(2R)-2,3-dihydroxy-3-methylbutanoate + NADP(+) = (2S)-2-acetolactate + NADPH + H(+)</text>
        <dbReference type="Rhea" id="RHEA:22068"/>
        <dbReference type="ChEBI" id="CHEBI:15378"/>
        <dbReference type="ChEBI" id="CHEBI:49072"/>
        <dbReference type="ChEBI" id="CHEBI:57783"/>
        <dbReference type="ChEBI" id="CHEBI:58349"/>
        <dbReference type="ChEBI" id="CHEBI:58476"/>
        <dbReference type="EC" id="1.1.1.86"/>
    </reaction>
</comment>
<comment type="catalytic activity">
    <reaction evidence="1">
        <text>(2R,3R)-2,3-dihydroxy-3-methylpentanoate + NADP(+) = (S)-2-ethyl-2-hydroxy-3-oxobutanoate + NADPH + H(+)</text>
        <dbReference type="Rhea" id="RHEA:13493"/>
        <dbReference type="ChEBI" id="CHEBI:15378"/>
        <dbReference type="ChEBI" id="CHEBI:49256"/>
        <dbReference type="ChEBI" id="CHEBI:49258"/>
        <dbReference type="ChEBI" id="CHEBI:57783"/>
        <dbReference type="ChEBI" id="CHEBI:58349"/>
        <dbReference type="EC" id="1.1.1.86"/>
    </reaction>
</comment>
<comment type="cofactor">
    <cofactor evidence="1">
        <name>Mg(2+)</name>
        <dbReference type="ChEBI" id="CHEBI:18420"/>
    </cofactor>
    <text evidence="1">Binds 2 magnesium ions per subunit.</text>
</comment>
<comment type="pathway">
    <text evidence="1">Amino-acid biosynthesis; L-isoleucine biosynthesis; L-isoleucine from 2-oxobutanoate: step 2/4.</text>
</comment>
<comment type="pathway">
    <text evidence="1">Amino-acid biosynthesis; L-valine biosynthesis; L-valine from pyruvate: step 2/4.</text>
</comment>
<comment type="similarity">
    <text evidence="1">Belongs to the ketol-acid reductoisomerase family.</text>
</comment>
<dbReference type="EC" id="1.1.1.86" evidence="1"/>
<dbReference type="EMBL" id="CP000319">
    <property type="protein sequence ID" value="ABE63499.1"/>
    <property type="molecule type" value="Genomic_DNA"/>
</dbReference>
<dbReference type="RefSeq" id="WP_011511165.1">
    <property type="nucleotide sequence ID" value="NC_007964.1"/>
</dbReference>
<dbReference type="SMR" id="Q1QJU8"/>
<dbReference type="STRING" id="323097.Nham_2720"/>
<dbReference type="KEGG" id="nha:Nham_2720"/>
<dbReference type="eggNOG" id="COG0059">
    <property type="taxonomic scope" value="Bacteria"/>
</dbReference>
<dbReference type="HOGENOM" id="CLU_033821_0_1_5"/>
<dbReference type="OrthoDB" id="9804088at2"/>
<dbReference type="UniPathway" id="UPA00047">
    <property type="reaction ID" value="UER00056"/>
</dbReference>
<dbReference type="UniPathway" id="UPA00049">
    <property type="reaction ID" value="UER00060"/>
</dbReference>
<dbReference type="Proteomes" id="UP000001953">
    <property type="component" value="Chromosome"/>
</dbReference>
<dbReference type="GO" id="GO:0005829">
    <property type="term" value="C:cytosol"/>
    <property type="evidence" value="ECO:0007669"/>
    <property type="project" value="TreeGrafter"/>
</dbReference>
<dbReference type="GO" id="GO:0004455">
    <property type="term" value="F:ketol-acid reductoisomerase activity"/>
    <property type="evidence" value="ECO:0007669"/>
    <property type="project" value="UniProtKB-UniRule"/>
</dbReference>
<dbReference type="GO" id="GO:0000287">
    <property type="term" value="F:magnesium ion binding"/>
    <property type="evidence" value="ECO:0007669"/>
    <property type="project" value="UniProtKB-UniRule"/>
</dbReference>
<dbReference type="GO" id="GO:0050661">
    <property type="term" value="F:NADP binding"/>
    <property type="evidence" value="ECO:0007669"/>
    <property type="project" value="InterPro"/>
</dbReference>
<dbReference type="GO" id="GO:0009097">
    <property type="term" value="P:isoleucine biosynthetic process"/>
    <property type="evidence" value="ECO:0007669"/>
    <property type="project" value="UniProtKB-UniRule"/>
</dbReference>
<dbReference type="GO" id="GO:0009099">
    <property type="term" value="P:L-valine biosynthetic process"/>
    <property type="evidence" value="ECO:0007669"/>
    <property type="project" value="UniProtKB-UniRule"/>
</dbReference>
<dbReference type="FunFam" id="3.40.50.720:FF:000023">
    <property type="entry name" value="Ketol-acid reductoisomerase (NADP(+))"/>
    <property type="match status" value="1"/>
</dbReference>
<dbReference type="Gene3D" id="6.10.240.10">
    <property type="match status" value="1"/>
</dbReference>
<dbReference type="Gene3D" id="3.40.50.720">
    <property type="entry name" value="NAD(P)-binding Rossmann-like Domain"/>
    <property type="match status" value="1"/>
</dbReference>
<dbReference type="HAMAP" id="MF_00435">
    <property type="entry name" value="IlvC"/>
    <property type="match status" value="1"/>
</dbReference>
<dbReference type="InterPro" id="IPR008927">
    <property type="entry name" value="6-PGluconate_DH-like_C_sf"/>
</dbReference>
<dbReference type="InterPro" id="IPR013023">
    <property type="entry name" value="KARI"/>
</dbReference>
<dbReference type="InterPro" id="IPR000506">
    <property type="entry name" value="KARI_C"/>
</dbReference>
<dbReference type="InterPro" id="IPR013116">
    <property type="entry name" value="KARI_N"/>
</dbReference>
<dbReference type="InterPro" id="IPR014359">
    <property type="entry name" value="KARI_prok"/>
</dbReference>
<dbReference type="InterPro" id="IPR036291">
    <property type="entry name" value="NAD(P)-bd_dom_sf"/>
</dbReference>
<dbReference type="NCBIfam" id="TIGR00465">
    <property type="entry name" value="ilvC"/>
    <property type="match status" value="1"/>
</dbReference>
<dbReference type="NCBIfam" id="NF004017">
    <property type="entry name" value="PRK05479.1"/>
    <property type="match status" value="1"/>
</dbReference>
<dbReference type="NCBIfam" id="NF009940">
    <property type="entry name" value="PRK13403.1"/>
    <property type="match status" value="1"/>
</dbReference>
<dbReference type="PANTHER" id="PTHR21371">
    <property type="entry name" value="KETOL-ACID REDUCTOISOMERASE, MITOCHONDRIAL"/>
    <property type="match status" value="1"/>
</dbReference>
<dbReference type="PANTHER" id="PTHR21371:SF1">
    <property type="entry name" value="KETOL-ACID REDUCTOISOMERASE, MITOCHONDRIAL"/>
    <property type="match status" value="1"/>
</dbReference>
<dbReference type="Pfam" id="PF01450">
    <property type="entry name" value="KARI_C"/>
    <property type="match status" value="1"/>
</dbReference>
<dbReference type="Pfam" id="PF07991">
    <property type="entry name" value="KARI_N"/>
    <property type="match status" value="1"/>
</dbReference>
<dbReference type="PIRSF" id="PIRSF000116">
    <property type="entry name" value="IlvC_gammaproteo"/>
    <property type="match status" value="1"/>
</dbReference>
<dbReference type="SUPFAM" id="SSF48179">
    <property type="entry name" value="6-phosphogluconate dehydrogenase C-terminal domain-like"/>
    <property type="match status" value="1"/>
</dbReference>
<dbReference type="SUPFAM" id="SSF51735">
    <property type="entry name" value="NAD(P)-binding Rossmann-fold domains"/>
    <property type="match status" value="1"/>
</dbReference>
<dbReference type="PROSITE" id="PS51851">
    <property type="entry name" value="KARI_C"/>
    <property type="match status" value="1"/>
</dbReference>
<dbReference type="PROSITE" id="PS51850">
    <property type="entry name" value="KARI_N"/>
    <property type="match status" value="1"/>
</dbReference>